<gene>
    <name type="primary">cobQ</name>
    <name type="ordered locus">TK0854</name>
</gene>
<dbReference type="EMBL" id="D50533">
    <property type="protein sequence ID" value="BAA21090.1"/>
    <property type="molecule type" value="Genomic_DNA"/>
</dbReference>
<dbReference type="EMBL" id="AP006878">
    <property type="protein sequence ID" value="BAD85043.1"/>
    <property type="molecule type" value="Genomic_DNA"/>
</dbReference>
<dbReference type="RefSeq" id="WP_011249805.1">
    <property type="nucleotide sequence ID" value="NC_006624.1"/>
</dbReference>
<dbReference type="SMR" id="O33475"/>
<dbReference type="FunCoup" id="O33475">
    <property type="interactions" value="53"/>
</dbReference>
<dbReference type="STRING" id="69014.TK0854"/>
<dbReference type="EnsemblBacteria" id="BAD85043">
    <property type="protein sequence ID" value="BAD85043"/>
    <property type="gene ID" value="TK0854"/>
</dbReference>
<dbReference type="GeneID" id="78447369"/>
<dbReference type="KEGG" id="tko:TK0854"/>
<dbReference type="PATRIC" id="fig|69014.16.peg.833"/>
<dbReference type="eggNOG" id="arCOG00105">
    <property type="taxonomic scope" value="Archaea"/>
</dbReference>
<dbReference type="HOGENOM" id="CLU_019250_2_2_2"/>
<dbReference type="InParanoid" id="O33475"/>
<dbReference type="OrthoDB" id="53136at2157"/>
<dbReference type="PhylomeDB" id="O33475"/>
<dbReference type="UniPathway" id="UPA00148"/>
<dbReference type="Proteomes" id="UP000000536">
    <property type="component" value="Chromosome"/>
</dbReference>
<dbReference type="GO" id="GO:0015420">
    <property type="term" value="F:ABC-type vitamin B12 transporter activity"/>
    <property type="evidence" value="ECO:0007669"/>
    <property type="project" value="UniProtKB-UniRule"/>
</dbReference>
<dbReference type="GO" id="GO:0003824">
    <property type="term" value="F:catalytic activity"/>
    <property type="evidence" value="ECO:0007669"/>
    <property type="project" value="InterPro"/>
</dbReference>
<dbReference type="GO" id="GO:0009236">
    <property type="term" value="P:cobalamin biosynthetic process"/>
    <property type="evidence" value="ECO:0007669"/>
    <property type="project" value="UniProtKB-UniRule"/>
</dbReference>
<dbReference type="CDD" id="cd05389">
    <property type="entry name" value="CobQ_N"/>
    <property type="match status" value="1"/>
</dbReference>
<dbReference type="CDD" id="cd01750">
    <property type="entry name" value="GATase1_CobQ"/>
    <property type="match status" value="1"/>
</dbReference>
<dbReference type="Gene3D" id="3.40.50.880">
    <property type="match status" value="1"/>
</dbReference>
<dbReference type="Gene3D" id="3.40.50.300">
    <property type="entry name" value="P-loop containing nucleotide triphosphate hydrolases"/>
    <property type="match status" value="1"/>
</dbReference>
<dbReference type="HAMAP" id="MF_00028">
    <property type="entry name" value="CobQ"/>
    <property type="match status" value="1"/>
</dbReference>
<dbReference type="InterPro" id="IPR029062">
    <property type="entry name" value="Class_I_gatase-like"/>
</dbReference>
<dbReference type="InterPro" id="IPR002586">
    <property type="entry name" value="CobQ/CobB/MinD/ParA_Nub-bd_dom"/>
</dbReference>
<dbReference type="InterPro" id="IPR033949">
    <property type="entry name" value="CobQ_GATase1"/>
</dbReference>
<dbReference type="InterPro" id="IPR047045">
    <property type="entry name" value="CobQ_N"/>
</dbReference>
<dbReference type="InterPro" id="IPR004459">
    <property type="entry name" value="CobQ_synth"/>
</dbReference>
<dbReference type="InterPro" id="IPR011698">
    <property type="entry name" value="GATase_3"/>
</dbReference>
<dbReference type="InterPro" id="IPR027417">
    <property type="entry name" value="P-loop_NTPase"/>
</dbReference>
<dbReference type="NCBIfam" id="TIGR00313">
    <property type="entry name" value="cobQ"/>
    <property type="match status" value="1"/>
</dbReference>
<dbReference type="NCBIfam" id="NF001989">
    <property type="entry name" value="PRK00784.1"/>
    <property type="match status" value="1"/>
</dbReference>
<dbReference type="PANTHER" id="PTHR21343:SF1">
    <property type="entry name" value="COBYRIC ACID SYNTHASE"/>
    <property type="match status" value="1"/>
</dbReference>
<dbReference type="PANTHER" id="PTHR21343">
    <property type="entry name" value="DETHIOBIOTIN SYNTHETASE"/>
    <property type="match status" value="1"/>
</dbReference>
<dbReference type="Pfam" id="PF01656">
    <property type="entry name" value="CbiA"/>
    <property type="match status" value="1"/>
</dbReference>
<dbReference type="Pfam" id="PF07685">
    <property type="entry name" value="GATase_3"/>
    <property type="match status" value="1"/>
</dbReference>
<dbReference type="SUPFAM" id="SSF52317">
    <property type="entry name" value="Class I glutamine amidotransferase-like"/>
    <property type="match status" value="1"/>
</dbReference>
<dbReference type="SUPFAM" id="SSF52540">
    <property type="entry name" value="P-loop containing nucleoside triphosphate hydrolases"/>
    <property type="match status" value="1"/>
</dbReference>
<dbReference type="PROSITE" id="PS51274">
    <property type="entry name" value="GATASE_COBBQ"/>
    <property type="match status" value="1"/>
</dbReference>
<proteinExistence type="inferred from homology"/>
<comment type="function">
    <text evidence="1">Catalyzes amidations at positions B, D, E, and G on adenosylcobyrinic A,C-diamide. NH(2) groups are provided by glutamine, and one molecule of ATP is hydrogenolyzed for each amidation (By similarity).</text>
</comment>
<comment type="pathway">
    <text>Cofactor biosynthesis; adenosylcobalamin biosynthesis.</text>
</comment>
<comment type="similarity">
    <text evidence="2">Belongs to the CobB/CobQ family. CobQ subfamily.</text>
</comment>
<name>COBQ_THEKO</name>
<evidence type="ECO:0000250" key="1"/>
<evidence type="ECO:0000305" key="2"/>
<keyword id="KW-0169">Cobalamin biosynthesis</keyword>
<keyword id="KW-0315">Glutamine amidotransferase</keyword>
<keyword id="KW-1185">Reference proteome</keyword>
<feature type="chain" id="PRO_0000141356" description="Probable cobyric acid synthase">
    <location>
        <begin position="1"/>
        <end position="483"/>
    </location>
</feature>
<feature type="domain" description="GATase cobBQ-type">
    <location>
        <begin position="247"/>
        <end position="433"/>
    </location>
</feature>
<feature type="active site" description="Nucleophile" evidence="1">
    <location>
        <position position="325"/>
    </location>
</feature>
<feature type="active site" evidence="1">
    <location>
        <position position="425"/>
    </location>
</feature>
<feature type="sequence conflict" description="In Ref. 1; BAA21090." evidence="2" ref="1">
    <original>G</original>
    <variation>V</variation>
    <location>
        <position position="378"/>
    </location>
</feature>
<feature type="sequence conflict" description="In Ref. 1; BAA21090." evidence="2" ref="1">
    <original>EKFTRVVRESVDVEYIIQRLGL</original>
    <variation>REVYPGCEGER</variation>
    <location>
        <begin position="462"/>
        <end position="483"/>
    </location>
</feature>
<protein>
    <recommendedName>
        <fullName>Probable cobyric acid synthase</fullName>
    </recommendedName>
</protein>
<organism>
    <name type="scientific">Thermococcus kodakarensis (strain ATCC BAA-918 / JCM 12380 / KOD1)</name>
    <name type="common">Pyrococcus kodakaraensis (strain KOD1)</name>
    <dbReference type="NCBI Taxonomy" id="69014"/>
    <lineage>
        <taxon>Archaea</taxon>
        <taxon>Methanobacteriati</taxon>
        <taxon>Methanobacteriota</taxon>
        <taxon>Thermococci</taxon>
        <taxon>Thermococcales</taxon>
        <taxon>Thermococcaceae</taxon>
        <taxon>Thermococcus</taxon>
    </lineage>
</organism>
<reference key="1">
    <citation type="journal article" date="1997" name="J. Ferment. Bioeng.">
        <title>Gene cloning and sequence analysis of cobyric acid synthase and cobalamin (5'-phosphate) synthase from hyperthermophilic archaeon Pyrococcus sp. KOD1.</title>
        <authorList>
            <person name="Rahman R."/>
            <person name="Fujiwara S."/>
            <person name="Imanaka T."/>
        </authorList>
    </citation>
    <scope>NUCLEOTIDE SEQUENCE [GENOMIC DNA]</scope>
    <source>
        <strain>ATCC BAA-918 / JCM 12380 / KOD1</strain>
    </source>
</reference>
<reference key="2">
    <citation type="journal article" date="2005" name="Genome Res.">
        <title>Complete genome sequence of the hyperthermophilic archaeon Thermococcus kodakaraensis KOD1 and comparison with Pyrococcus genomes.</title>
        <authorList>
            <person name="Fukui T."/>
            <person name="Atomi H."/>
            <person name="Kanai T."/>
            <person name="Matsumi R."/>
            <person name="Fujiwara S."/>
            <person name="Imanaka T."/>
        </authorList>
    </citation>
    <scope>NUCLEOTIDE SEQUENCE [LARGE SCALE GENOMIC DNA]</scope>
    <source>
        <strain>ATCC BAA-918 / JCM 12380 / KOD1</strain>
    </source>
</reference>
<accession>O33475</accession>
<accession>Q5JI00</accession>
<sequence length="483" mass="53959">MGKALMVQGTMSGAGKSLLVAALCRIFTNLGYDVVPFKSQNMSLNSAPSIEGGEISRAQYLQALACRKKPSVKFNPILLKPEGNMRSQVVFMGRPIGSVSARDYMLSKKAELFEKAIEVLKELMREHDLVIIEGAGSPVEINLKDYDIANMRVAKAVNAPVILVADIDRGGSFAQIVGTMELLSEEERELVMGFIFNKFRGDASLLKPGFEFLEKRCGKPVLGVVPYIEHRLPEEDSLAEFPKVRGDLHIQIIKLPHISNFTDFEPLHWANGVDYVTRAEEIKGDLIIVPGSKNTVEDLLWMRENGIEDAIIEAHREGSFVVGICGGFQMLGKEIIDEVESKRGRVEGIGLLPAKTVFTGEKRTNHLKAEVLWEPARGMWVEGYEIRMGRSTSEKPFSVITSINGARAFEPEGAIGKRAFGTYLHGIFHNFAFTERFLNMLRAEKGLEPVKVEEWSIEEEIEKFTRVVRESVDVEYIIQRLGL</sequence>